<protein>
    <recommendedName>
        <fullName evidence="1">Adenylosuccinate synthetase</fullName>
        <shortName evidence="1">AMPSase</shortName>
        <shortName evidence="1">AdSS</shortName>
        <ecNumber evidence="1">6.3.4.4</ecNumber>
    </recommendedName>
    <alternativeName>
        <fullName evidence="1">IMP--aspartate ligase</fullName>
    </alternativeName>
</protein>
<proteinExistence type="inferred from homology"/>
<feature type="chain" id="PRO_1000089306" description="Adenylosuccinate synthetase">
    <location>
        <begin position="1"/>
        <end position="429"/>
    </location>
</feature>
<feature type="active site" description="Proton acceptor" evidence="1">
    <location>
        <position position="13"/>
    </location>
</feature>
<feature type="active site" description="Proton donor" evidence="1">
    <location>
        <position position="41"/>
    </location>
</feature>
<feature type="binding site" evidence="1">
    <location>
        <begin position="12"/>
        <end position="18"/>
    </location>
    <ligand>
        <name>GTP</name>
        <dbReference type="ChEBI" id="CHEBI:37565"/>
    </ligand>
</feature>
<feature type="binding site" description="in other chain" evidence="1">
    <location>
        <begin position="13"/>
        <end position="16"/>
    </location>
    <ligand>
        <name>IMP</name>
        <dbReference type="ChEBI" id="CHEBI:58053"/>
        <note>ligand shared between dimeric partners</note>
    </ligand>
</feature>
<feature type="binding site" evidence="1">
    <location>
        <position position="13"/>
    </location>
    <ligand>
        <name>Mg(2+)</name>
        <dbReference type="ChEBI" id="CHEBI:18420"/>
    </ligand>
</feature>
<feature type="binding site" description="in other chain" evidence="1">
    <location>
        <begin position="38"/>
        <end position="41"/>
    </location>
    <ligand>
        <name>IMP</name>
        <dbReference type="ChEBI" id="CHEBI:58053"/>
        <note>ligand shared between dimeric partners</note>
    </ligand>
</feature>
<feature type="binding site" evidence="1">
    <location>
        <begin position="40"/>
        <end position="42"/>
    </location>
    <ligand>
        <name>GTP</name>
        <dbReference type="ChEBI" id="CHEBI:37565"/>
    </ligand>
</feature>
<feature type="binding site" evidence="1">
    <location>
        <position position="40"/>
    </location>
    <ligand>
        <name>Mg(2+)</name>
        <dbReference type="ChEBI" id="CHEBI:18420"/>
    </ligand>
</feature>
<feature type="binding site" description="in other chain" evidence="1">
    <location>
        <position position="128"/>
    </location>
    <ligand>
        <name>IMP</name>
        <dbReference type="ChEBI" id="CHEBI:58053"/>
        <note>ligand shared between dimeric partners</note>
    </ligand>
</feature>
<feature type="binding site" evidence="1">
    <location>
        <position position="142"/>
    </location>
    <ligand>
        <name>IMP</name>
        <dbReference type="ChEBI" id="CHEBI:58053"/>
        <note>ligand shared between dimeric partners</note>
    </ligand>
</feature>
<feature type="binding site" description="in other chain" evidence="1">
    <location>
        <position position="223"/>
    </location>
    <ligand>
        <name>IMP</name>
        <dbReference type="ChEBI" id="CHEBI:58053"/>
        <note>ligand shared between dimeric partners</note>
    </ligand>
</feature>
<feature type="binding site" description="in other chain" evidence="1">
    <location>
        <position position="238"/>
    </location>
    <ligand>
        <name>IMP</name>
        <dbReference type="ChEBI" id="CHEBI:58053"/>
        <note>ligand shared between dimeric partners</note>
    </ligand>
</feature>
<feature type="binding site" evidence="1">
    <location>
        <begin position="298"/>
        <end position="304"/>
    </location>
    <ligand>
        <name>substrate</name>
    </ligand>
</feature>
<feature type="binding site" description="in other chain" evidence="1">
    <location>
        <position position="302"/>
    </location>
    <ligand>
        <name>IMP</name>
        <dbReference type="ChEBI" id="CHEBI:58053"/>
        <note>ligand shared between dimeric partners</note>
    </ligand>
</feature>
<feature type="binding site" evidence="1">
    <location>
        <position position="304"/>
    </location>
    <ligand>
        <name>GTP</name>
        <dbReference type="ChEBI" id="CHEBI:37565"/>
    </ligand>
</feature>
<feature type="binding site" evidence="1">
    <location>
        <begin position="330"/>
        <end position="332"/>
    </location>
    <ligand>
        <name>GTP</name>
        <dbReference type="ChEBI" id="CHEBI:37565"/>
    </ligand>
</feature>
<feature type="binding site" evidence="1">
    <location>
        <begin position="412"/>
        <end position="414"/>
    </location>
    <ligand>
        <name>GTP</name>
        <dbReference type="ChEBI" id="CHEBI:37565"/>
    </ligand>
</feature>
<accession>B2GL12</accession>
<sequence>MPAIVIVGAQWGDEGKGKATDLLGGRVDYVVKPNGGNNAGHTVVVGGEKFELKLLPAGILSPNATSVIGNGVVINPQALFEEIDGLEARGADTSHLRISANAHLVAPYHQTLDQVSERFLGKRAIGTTGRGIGPTYMDKVGRLGIRVQDVLDESILRQKIEGALRQKNELLVKLYNRRAFEVDEIVEYFMGFADRLAPMIVDSTRLLNEALDRDEVVLMEGGQATYLDVDHGTYPFVTSSNPTAGGASVGSGVGPTRITRVIGIQKAYTTRVGAGPFPTELFDEMGERLRTTGGEFGVNTGRPRRTGWYDAVMARQAARINGFTDLFITKLDVLTGLSEIPVCVAYEVDGQRFDEMPMTQSDFHHAVPVYENFPGWTEDITGARSLEDLPKNAQDYVHALEAMSGCRISAVGVGPDRDDTIVVRDLIAD</sequence>
<gene>
    <name evidence="1" type="primary">purA</name>
    <name type="ordered locus">KRH_02020</name>
</gene>
<evidence type="ECO:0000255" key="1">
    <source>
        <dbReference type="HAMAP-Rule" id="MF_00011"/>
    </source>
</evidence>
<reference key="1">
    <citation type="journal article" date="2008" name="J. Bacteriol.">
        <title>Complete genome sequence of the soil actinomycete Kocuria rhizophila.</title>
        <authorList>
            <person name="Takarada H."/>
            <person name="Sekine M."/>
            <person name="Kosugi H."/>
            <person name="Matsuo Y."/>
            <person name="Fujisawa T."/>
            <person name="Omata S."/>
            <person name="Kishi E."/>
            <person name="Shimizu A."/>
            <person name="Tsukatani N."/>
            <person name="Tanikawa S."/>
            <person name="Fujita N."/>
            <person name="Harayama S."/>
        </authorList>
    </citation>
    <scope>NUCLEOTIDE SEQUENCE [LARGE SCALE GENOMIC DNA]</scope>
    <source>
        <strain>ATCC 9341 / DSM 348 / NBRC 103217 / DC2201</strain>
    </source>
</reference>
<name>PURA_KOCRD</name>
<comment type="function">
    <text evidence="1">Plays an important role in the de novo pathway of purine nucleotide biosynthesis. Catalyzes the first committed step in the biosynthesis of AMP from IMP.</text>
</comment>
<comment type="catalytic activity">
    <reaction evidence="1">
        <text>IMP + L-aspartate + GTP = N(6)-(1,2-dicarboxyethyl)-AMP + GDP + phosphate + 2 H(+)</text>
        <dbReference type="Rhea" id="RHEA:15753"/>
        <dbReference type="ChEBI" id="CHEBI:15378"/>
        <dbReference type="ChEBI" id="CHEBI:29991"/>
        <dbReference type="ChEBI" id="CHEBI:37565"/>
        <dbReference type="ChEBI" id="CHEBI:43474"/>
        <dbReference type="ChEBI" id="CHEBI:57567"/>
        <dbReference type="ChEBI" id="CHEBI:58053"/>
        <dbReference type="ChEBI" id="CHEBI:58189"/>
        <dbReference type="EC" id="6.3.4.4"/>
    </reaction>
</comment>
<comment type="cofactor">
    <cofactor evidence="1">
        <name>Mg(2+)</name>
        <dbReference type="ChEBI" id="CHEBI:18420"/>
    </cofactor>
    <text evidence="1">Binds 1 Mg(2+) ion per subunit.</text>
</comment>
<comment type="pathway">
    <text evidence="1">Purine metabolism; AMP biosynthesis via de novo pathway; AMP from IMP: step 1/2.</text>
</comment>
<comment type="subunit">
    <text evidence="1">Homodimer.</text>
</comment>
<comment type="subcellular location">
    <subcellularLocation>
        <location evidence="1">Cytoplasm</location>
    </subcellularLocation>
</comment>
<comment type="similarity">
    <text evidence="1">Belongs to the adenylosuccinate synthetase family.</text>
</comment>
<keyword id="KW-0963">Cytoplasm</keyword>
<keyword id="KW-0342">GTP-binding</keyword>
<keyword id="KW-0436">Ligase</keyword>
<keyword id="KW-0460">Magnesium</keyword>
<keyword id="KW-0479">Metal-binding</keyword>
<keyword id="KW-0547">Nucleotide-binding</keyword>
<keyword id="KW-0658">Purine biosynthesis</keyword>
<keyword id="KW-1185">Reference proteome</keyword>
<organism>
    <name type="scientific">Kocuria rhizophila (strain ATCC 9341 / DSM 348 / NBRC 103217 / DC2201)</name>
    <dbReference type="NCBI Taxonomy" id="378753"/>
    <lineage>
        <taxon>Bacteria</taxon>
        <taxon>Bacillati</taxon>
        <taxon>Actinomycetota</taxon>
        <taxon>Actinomycetes</taxon>
        <taxon>Micrococcales</taxon>
        <taxon>Micrococcaceae</taxon>
        <taxon>Kocuria</taxon>
    </lineage>
</organism>
<dbReference type="EC" id="6.3.4.4" evidence="1"/>
<dbReference type="EMBL" id="AP009152">
    <property type="protein sequence ID" value="BAG28549.1"/>
    <property type="molecule type" value="Genomic_DNA"/>
</dbReference>
<dbReference type="RefSeq" id="WP_012397276.1">
    <property type="nucleotide sequence ID" value="NC_010617.1"/>
</dbReference>
<dbReference type="SMR" id="B2GL12"/>
<dbReference type="STRING" id="378753.KRH_02020"/>
<dbReference type="KEGG" id="krh:KRH_02020"/>
<dbReference type="eggNOG" id="COG0104">
    <property type="taxonomic scope" value="Bacteria"/>
</dbReference>
<dbReference type="HOGENOM" id="CLU_029848_0_0_11"/>
<dbReference type="OrthoDB" id="9807553at2"/>
<dbReference type="UniPathway" id="UPA00075">
    <property type="reaction ID" value="UER00335"/>
</dbReference>
<dbReference type="Proteomes" id="UP000008838">
    <property type="component" value="Chromosome"/>
</dbReference>
<dbReference type="GO" id="GO:0005737">
    <property type="term" value="C:cytoplasm"/>
    <property type="evidence" value="ECO:0007669"/>
    <property type="project" value="UniProtKB-SubCell"/>
</dbReference>
<dbReference type="GO" id="GO:0004019">
    <property type="term" value="F:adenylosuccinate synthase activity"/>
    <property type="evidence" value="ECO:0007669"/>
    <property type="project" value="UniProtKB-UniRule"/>
</dbReference>
<dbReference type="GO" id="GO:0005525">
    <property type="term" value="F:GTP binding"/>
    <property type="evidence" value="ECO:0007669"/>
    <property type="project" value="UniProtKB-UniRule"/>
</dbReference>
<dbReference type="GO" id="GO:0000287">
    <property type="term" value="F:magnesium ion binding"/>
    <property type="evidence" value="ECO:0007669"/>
    <property type="project" value="UniProtKB-UniRule"/>
</dbReference>
<dbReference type="GO" id="GO:0044208">
    <property type="term" value="P:'de novo' AMP biosynthetic process"/>
    <property type="evidence" value="ECO:0007669"/>
    <property type="project" value="UniProtKB-UniRule"/>
</dbReference>
<dbReference type="GO" id="GO:0046040">
    <property type="term" value="P:IMP metabolic process"/>
    <property type="evidence" value="ECO:0007669"/>
    <property type="project" value="TreeGrafter"/>
</dbReference>
<dbReference type="CDD" id="cd03108">
    <property type="entry name" value="AdSS"/>
    <property type="match status" value="1"/>
</dbReference>
<dbReference type="FunFam" id="1.10.300.10:FF:000001">
    <property type="entry name" value="Adenylosuccinate synthetase"/>
    <property type="match status" value="1"/>
</dbReference>
<dbReference type="FunFam" id="3.90.170.10:FF:000001">
    <property type="entry name" value="Adenylosuccinate synthetase"/>
    <property type="match status" value="1"/>
</dbReference>
<dbReference type="Gene3D" id="3.40.440.10">
    <property type="entry name" value="Adenylosuccinate Synthetase, subunit A, domain 1"/>
    <property type="match status" value="1"/>
</dbReference>
<dbReference type="Gene3D" id="1.10.300.10">
    <property type="entry name" value="Adenylosuccinate Synthetase, subunit A, domain 2"/>
    <property type="match status" value="1"/>
</dbReference>
<dbReference type="Gene3D" id="3.90.170.10">
    <property type="entry name" value="Adenylosuccinate Synthetase, subunit A, domain 3"/>
    <property type="match status" value="1"/>
</dbReference>
<dbReference type="HAMAP" id="MF_00011">
    <property type="entry name" value="Adenylosucc_synth"/>
    <property type="match status" value="1"/>
</dbReference>
<dbReference type="InterPro" id="IPR018220">
    <property type="entry name" value="Adenylosuccin_syn_GTP-bd"/>
</dbReference>
<dbReference type="InterPro" id="IPR033128">
    <property type="entry name" value="Adenylosuccin_syn_Lys_AS"/>
</dbReference>
<dbReference type="InterPro" id="IPR042109">
    <property type="entry name" value="Adenylosuccinate_synth_dom1"/>
</dbReference>
<dbReference type="InterPro" id="IPR042110">
    <property type="entry name" value="Adenylosuccinate_synth_dom2"/>
</dbReference>
<dbReference type="InterPro" id="IPR042111">
    <property type="entry name" value="Adenylosuccinate_synth_dom3"/>
</dbReference>
<dbReference type="InterPro" id="IPR001114">
    <property type="entry name" value="Adenylosuccinate_synthetase"/>
</dbReference>
<dbReference type="InterPro" id="IPR027417">
    <property type="entry name" value="P-loop_NTPase"/>
</dbReference>
<dbReference type="NCBIfam" id="NF002223">
    <property type="entry name" value="PRK01117.1"/>
    <property type="match status" value="1"/>
</dbReference>
<dbReference type="NCBIfam" id="TIGR00184">
    <property type="entry name" value="purA"/>
    <property type="match status" value="1"/>
</dbReference>
<dbReference type="PANTHER" id="PTHR11846">
    <property type="entry name" value="ADENYLOSUCCINATE SYNTHETASE"/>
    <property type="match status" value="1"/>
</dbReference>
<dbReference type="PANTHER" id="PTHR11846:SF0">
    <property type="entry name" value="ADENYLOSUCCINATE SYNTHETASE"/>
    <property type="match status" value="1"/>
</dbReference>
<dbReference type="Pfam" id="PF00709">
    <property type="entry name" value="Adenylsucc_synt"/>
    <property type="match status" value="1"/>
</dbReference>
<dbReference type="SMART" id="SM00788">
    <property type="entry name" value="Adenylsucc_synt"/>
    <property type="match status" value="1"/>
</dbReference>
<dbReference type="SUPFAM" id="SSF52540">
    <property type="entry name" value="P-loop containing nucleoside triphosphate hydrolases"/>
    <property type="match status" value="1"/>
</dbReference>
<dbReference type="PROSITE" id="PS01266">
    <property type="entry name" value="ADENYLOSUCCIN_SYN_1"/>
    <property type="match status" value="1"/>
</dbReference>
<dbReference type="PROSITE" id="PS00513">
    <property type="entry name" value="ADENYLOSUCCIN_SYN_2"/>
    <property type="match status" value="1"/>
</dbReference>